<evidence type="ECO:0000250" key="1">
    <source>
        <dbReference type="UniProtKB" id="P05306"/>
    </source>
</evidence>
<evidence type="ECO:0000255" key="2"/>
<evidence type="ECO:0000255" key="3">
    <source>
        <dbReference type="PROSITE-ProRule" id="PRU00421"/>
    </source>
</evidence>
<evidence type="ECO:0000255" key="4">
    <source>
        <dbReference type="PROSITE-ProRule" id="PRU00426"/>
    </source>
</evidence>
<evidence type="ECO:0000303" key="5">
    <source>
    </source>
</evidence>
<evidence type="ECO:0000305" key="6"/>
<organism>
    <name type="scientific">Vibrio alginolyticus</name>
    <dbReference type="NCBI Taxonomy" id="663"/>
    <lineage>
        <taxon>Bacteria</taxon>
        <taxon>Pseudomonadati</taxon>
        <taxon>Pseudomonadota</taxon>
        <taxon>Gammaproteobacteria</taxon>
        <taxon>Vibrionales</taxon>
        <taxon>Vibrionaceae</taxon>
        <taxon>Vibrio</taxon>
    </lineage>
</organism>
<gene>
    <name evidence="5" type="primary">scrA</name>
</gene>
<name>PTSBC_VIBAL</name>
<reference key="1">
    <citation type="journal article" date="1990" name="Gene">
        <title>Nucleotide sequence and analysis of the Vibrio alginolyticus sucrose uptake-encoding region.</title>
        <authorList>
            <person name="Blatch G.L."/>
            <person name="Scholle R.R."/>
            <person name="Woods D.R."/>
        </authorList>
    </citation>
    <scope>NUCLEOTIDE SEQUENCE [GENOMIC DNA]</scope>
</reference>
<reference key="2">
    <citation type="journal article" date="1991" name="Gene">
        <title>Nucleotide sequence and analysis of the Vibrio alginolyticus scr repressor-encoding gene (scrR).</title>
        <authorList>
            <person name="Blatch G.L."/>
            <person name="Woods D.R."/>
        </authorList>
    </citation>
    <scope>NUCLEOTIDE SEQUENCE [GENOMIC DNA] OF 1-12</scope>
</reference>
<protein>
    <recommendedName>
        <fullName evidence="6">PTS system sucrose-specific EIIBC component</fullName>
    </recommendedName>
    <alternativeName>
        <fullName>EIIBC-Scr</fullName>
        <shortName>EII-Scr</shortName>
    </alternativeName>
    <domain>
        <recommendedName>
            <fullName>Sucrose-specific phosphotransferase enzyme IIB component</fullName>
            <ecNumber evidence="1">2.7.1.211</ecNumber>
        </recommendedName>
        <alternativeName>
            <fullName>PTS system sucrose-specific EIIB component</fullName>
        </alternativeName>
    </domain>
    <domain>
        <recommendedName>
            <fullName>Sucrose permease IIC component</fullName>
        </recommendedName>
        <alternativeName>
            <fullName>PTS system sucrose-specific EIIC component</fullName>
        </alternativeName>
    </domain>
</protein>
<feature type="chain" id="PRO_0000186672" description="PTS system sucrose-specific EIIBC component">
    <location>
        <begin position="1"/>
        <end position="479"/>
    </location>
</feature>
<feature type="transmembrane region" description="Helical" evidence="4">
    <location>
        <begin position="112"/>
        <end position="132"/>
    </location>
</feature>
<feature type="transmembrane region" description="Helical" evidence="4">
    <location>
        <begin position="158"/>
        <end position="178"/>
    </location>
</feature>
<feature type="transmembrane region" description="Helical" evidence="4">
    <location>
        <begin position="182"/>
        <end position="202"/>
    </location>
</feature>
<feature type="transmembrane region" description="Helical" evidence="4">
    <location>
        <begin position="204"/>
        <end position="224"/>
    </location>
</feature>
<feature type="transmembrane region" description="Helical" evidence="4">
    <location>
        <begin position="232"/>
        <end position="252"/>
    </location>
</feature>
<feature type="transmembrane region" description="Helical" evidence="4">
    <location>
        <begin position="264"/>
        <end position="284"/>
    </location>
</feature>
<feature type="transmembrane region" description="Helical" evidence="4">
    <location>
        <begin position="303"/>
        <end position="323"/>
    </location>
</feature>
<feature type="transmembrane region" description="Helical" evidence="4">
    <location>
        <begin position="345"/>
        <end position="365"/>
    </location>
</feature>
<feature type="transmembrane region" description="Helical" evidence="4">
    <location>
        <begin position="376"/>
        <end position="396"/>
    </location>
</feature>
<feature type="transmembrane region" description="Helical" evidence="4">
    <location>
        <begin position="403"/>
        <end position="423"/>
    </location>
</feature>
<feature type="transmembrane region" description="Helical" evidence="4">
    <location>
        <begin position="448"/>
        <end position="468"/>
    </location>
</feature>
<feature type="domain" description="PTS EIIB type-1" evidence="3">
    <location>
        <begin position="4"/>
        <end position="87"/>
    </location>
</feature>
<feature type="domain" description="PTS EIIC type-1" evidence="4">
    <location>
        <begin position="120"/>
        <end position="477"/>
    </location>
</feature>
<feature type="active site" description="Phosphocysteine intermediate; for EIIB activity" evidence="3">
    <location>
        <position position="26"/>
    </location>
</feature>
<accession>P22825</accession>
<dbReference type="EC" id="2.7.1.211" evidence="1"/>
<dbReference type="EMBL" id="M76768">
    <property type="protein sequence ID" value="AAA27555.1"/>
    <property type="molecule type" value="Genomic_DNA"/>
</dbReference>
<dbReference type="EMBL" id="M35009">
    <property type="protein sequence ID" value="AAA27557.2"/>
    <property type="molecule type" value="Genomic_DNA"/>
</dbReference>
<dbReference type="PIR" id="JQ0781">
    <property type="entry name" value="JQ0781"/>
</dbReference>
<dbReference type="SMR" id="P22825"/>
<dbReference type="STRING" id="663.BAU10_17435"/>
<dbReference type="eggNOG" id="COG1263">
    <property type="taxonomic scope" value="Bacteria"/>
</dbReference>
<dbReference type="eggNOG" id="COG1264">
    <property type="taxonomic scope" value="Bacteria"/>
</dbReference>
<dbReference type="GO" id="GO:0005886">
    <property type="term" value="C:plasma membrane"/>
    <property type="evidence" value="ECO:0007669"/>
    <property type="project" value="UniProtKB-SubCell"/>
</dbReference>
<dbReference type="GO" id="GO:0016301">
    <property type="term" value="F:kinase activity"/>
    <property type="evidence" value="ECO:0007669"/>
    <property type="project" value="UniProtKB-KW"/>
</dbReference>
<dbReference type="GO" id="GO:0022878">
    <property type="term" value="F:protein-N(PI)-phosphohistidine-sucrose phosphotransferase system transporter activity"/>
    <property type="evidence" value="ECO:0007669"/>
    <property type="project" value="RHEA"/>
</dbReference>
<dbReference type="GO" id="GO:0090589">
    <property type="term" value="F:protein-phosphocysteine-trehalose phosphotransferase system transporter activity"/>
    <property type="evidence" value="ECO:0007669"/>
    <property type="project" value="TreeGrafter"/>
</dbReference>
<dbReference type="GO" id="GO:0009401">
    <property type="term" value="P:phosphoenolpyruvate-dependent sugar phosphotransferase system"/>
    <property type="evidence" value="ECO:0007669"/>
    <property type="project" value="UniProtKB-KW"/>
</dbReference>
<dbReference type="GO" id="GO:0015771">
    <property type="term" value="P:trehalose transport"/>
    <property type="evidence" value="ECO:0007669"/>
    <property type="project" value="TreeGrafter"/>
</dbReference>
<dbReference type="CDD" id="cd00212">
    <property type="entry name" value="PTS_IIB_glc"/>
    <property type="match status" value="1"/>
</dbReference>
<dbReference type="FunFam" id="3.30.1360.60:FF:000001">
    <property type="entry name" value="PTS system glucose-specific IIBC component PtsG"/>
    <property type="match status" value="1"/>
</dbReference>
<dbReference type="Gene3D" id="3.30.1360.60">
    <property type="entry name" value="Glucose permease domain IIB"/>
    <property type="match status" value="1"/>
</dbReference>
<dbReference type="InterPro" id="IPR036878">
    <property type="entry name" value="Glu_permease_IIB"/>
</dbReference>
<dbReference type="InterPro" id="IPR018113">
    <property type="entry name" value="PTrfase_EIIB_Cys"/>
</dbReference>
<dbReference type="InterPro" id="IPR003352">
    <property type="entry name" value="PTS_EIIC"/>
</dbReference>
<dbReference type="InterPro" id="IPR013013">
    <property type="entry name" value="PTS_EIIC_1"/>
</dbReference>
<dbReference type="InterPro" id="IPR001996">
    <property type="entry name" value="PTS_IIB_1"/>
</dbReference>
<dbReference type="InterPro" id="IPR010973">
    <property type="entry name" value="PTS_IIBC_sucr"/>
</dbReference>
<dbReference type="InterPro" id="IPR004719">
    <property type="entry name" value="PTS_maltose/Glc_sub_IIC"/>
</dbReference>
<dbReference type="InterPro" id="IPR050558">
    <property type="entry name" value="PTS_Sugar-Specific_Components"/>
</dbReference>
<dbReference type="NCBIfam" id="TIGR00826">
    <property type="entry name" value="EIIB_glc"/>
    <property type="match status" value="1"/>
</dbReference>
<dbReference type="NCBIfam" id="TIGR00852">
    <property type="entry name" value="pts-Glc"/>
    <property type="match status" value="1"/>
</dbReference>
<dbReference type="NCBIfam" id="TIGR01996">
    <property type="entry name" value="PTS-II-BC-sucr"/>
    <property type="match status" value="1"/>
</dbReference>
<dbReference type="PANTHER" id="PTHR30175">
    <property type="entry name" value="PHOSPHOTRANSFERASE SYSTEM TRANSPORT PROTEIN"/>
    <property type="match status" value="1"/>
</dbReference>
<dbReference type="PANTHER" id="PTHR30175:SF4">
    <property type="entry name" value="PTS SYSTEM TREHALOSE-SPECIFIC EIIBC COMPONENT"/>
    <property type="match status" value="1"/>
</dbReference>
<dbReference type="Pfam" id="PF00367">
    <property type="entry name" value="PTS_EIIB"/>
    <property type="match status" value="1"/>
</dbReference>
<dbReference type="Pfam" id="PF02378">
    <property type="entry name" value="PTS_EIIC"/>
    <property type="match status" value="1"/>
</dbReference>
<dbReference type="SUPFAM" id="SSF55604">
    <property type="entry name" value="Glucose permease domain IIB"/>
    <property type="match status" value="1"/>
</dbReference>
<dbReference type="PROSITE" id="PS51098">
    <property type="entry name" value="PTS_EIIB_TYPE_1"/>
    <property type="match status" value="1"/>
</dbReference>
<dbReference type="PROSITE" id="PS01035">
    <property type="entry name" value="PTS_EIIB_TYPE_1_CYS"/>
    <property type="match status" value="1"/>
</dbReference>
<dbReference type="PROSITE" id="PS51103">
    <property type="entry name" value="PTS_EIIC_TYPE_1"/>
    <property type="match status" value="1"/>
</dbReference>
<comment type="function">
    <text evidence="1">The phosphoenolpyruvate-dependent sugar phosphotransferase system (sugar PTS), a major carbohydrate active transport system, catalyzes the phosphorylation of incoming sugar substrates concomitantly with their translocation across the cell membrane (By similarity). This system is involved in sucrose transport (By similarity).</text>
</comment>
<comment type="catalytic activity">
    <reaction evidence="1">
        <text>N(pros)-phospho-L-histidyl-[protein](out) + sucrose = sucrose 6(G)-phosphate(in) + L-histidyl-[protein]</text>
        <dbReference type="Rhea" id="RHEA:49236"/>
        <dbReference type="Rhea" id="RHEA-COMP:9745"/>
        <dbReference type="Rhea" id="RHEA-COMP:9746"/>
        <dbReference type="ChEBI" id="CHEBI:17992"/>
        <dbReference type="ChEBI" id="CHEBI:29979"/>
        <dbReference type="ChEBI" id="CHEBI:64837"/>
        <dbReference type="ChEBI" id="CHEBI:91002"/>
        <dbReference type="EC" id="2.7.1.211"/>
    </reaction>
</comment>
<comment type="subcellular location">
    <subcellularLocation>
        <location evidence="6">Cell inner membrane</location>
        <topology evidence="2">Multi-pass membrane protein</topology>
    </subcellularLocation>
</comment>
<comment type="domain">
    <text evidence="3">The PTS EIIB type-1 domain is phosphorylated by phospho-EIIA on a cysteinyl residue. Then, it transfers the phosphoryl group to the sugar substrate concomitantly with the sugar uptake processed by the PTS EIIC type-1 domain.</text>
</comment>
<comment type="domain">
    <text evidence="4">The EIIC domain type-1 forms the PTS system translocation channel and contains the specific substrate-binding site.</text>
</comment>
<proteinExistence type="inferred from homology"/>
<keyword id="KW-0997">Cell inner membrane</keyword>
<keyword id="KW-1003">Cell membrane</keyword>
<keyword id="KW-0418">Kinase</keyword>
<keyword id="KW-0472">Membrane</keyword>
<keyword id="KW-0598">Phosphotransferase system</keyword>
<keyword id="KW-0762">Sugar transport</keyword>
<keyword id="KW-0808">Transferase</keyword>
<keyword id="KW-0812">Transmembrane</keyword>
<keyword id="KW-1133">Transmembrane helix</keyword>
<keyword id="KW-0813">Transport</keyword>
<sequence>MNYPAVAKELLTLLGGKSNITALAHCATRLRLAVADEQKIDEQAIDNLEGVKGQFKVAGQYQIIFGSGIVNQVYAEMAKLTGMSEMSTNDVASAGAEKQNIVQPAVKGLSDIFVPIIPAIVAGGLLMGIYNLLTAQGLFIDGKSLIEANPGLTDLANMINTFANAPFVYLPILLAFSASKKFGGNPYLGAALGMLMVHPDLLNGWGFGGASVSGNIPVWNILGFEIQKVGYQGSVLPVLVSAFILAKVELGLRKVIPSVLDNLLTPLLAIFIAGLLTFTVVGPFTRDIGFLLGDGLNWLYNTAGFVGGAVFGLIYAPFVITGMHHSFIAIETQLLADIATTGGTFIFPIAAMSNVSQGAAALAVGVMSKDKKMKGIAIPSGVTGLLGITEPAMFGVNLKLRYPFIAAVCAAALSSAFITMFNVKAQALGAAGLPGIISITPDKIGYYIAGMVIAFLTAFVLTIVLGIGDRAKVGKKAAA</sequence>